<name>MDH_BDEBA</name>
<reference key="1">
    <citation type="journal article" date="2004" name="Science">
        <title>A predator unmasked: life cycle of Bdellovibrio bacteriovorus from a genomic perspective.</title>
        <authorList>
            <person name="Rendulic S."/>
            <person name="Jagtap P."/>
            <person name="Rosinus A."/>
            <person name="Eppinger M."/>
            <person name="Baar C."/>
            <person name="Lanz C."/>
            <person name="Keller H."/>
            <person name="Lambert C."/>
            <person name="Evans K.J."/>
            <person name="Goesmann A."/>
            <person name="Meyer F."/>
            <person name="Sockett R.E."/>
            <person name="Schuster S.C."/>
        </authorList>
    </citation>
    <scope>NUCLEOTIDE SEQUENCE [LARGE SCALE GENOMIC DNA]</scope>
    <source>
        <strain>ATCC 15356 / DSM 50701 / NCIMB 9529 / HD100</strain>
    </source>
</reference>
<proteinExistence type="inferred from homology"/>
<keyword id="KW-0520">NAD</keyword>
<keyword id="KW-0560">Oxidoreductase</keyword>
<keyword id="KW-1185">Reference proteome</keyword>
<keyword id="KW-0816">Tricarboxylic acid cycle</keyword>
<gene>
    <name evidence="1" type="primary">mdh</name>
    <name type="ordered locus">Bd0928</name>
</gene>
<comment type="function">
    <text evidence="1">Catalyzes the reversible oxidation of malate to oxaloacetate.</text>
</comment>
<comment type="catalytic activity">
    <reaction evidence="1">
        <text>(S)-malate + NAD(+) = oxaloacetate + NADH + H(+)</text>
        <dbReference type="Rhea" id="RHEA:21432"/>
        <dbReference type="ChEBI" id="CHEBI:15378"/>
        <dbReference type="ChEBI" id="CHEBI:15589"/>
        <dbReference type="ChEBI" id="CHEBI:16452"/>
        <dbReference type="ChEBI" id="CHEBI:57540"/>
        <dbReference type="ChEBI" id="CHEBI:57945"/>
        <dbReference type="EC" id="1.1.1.37"/>
    </reaction>
</comment>
<comment type="similarity">
    <text evidence="1">Belongs to the LDH/MDH superfamily. MDH type 2 family.</text>
</comment>
<comment type="sequence caution" evidence="2">
    <conflict type="erroneous initiation">
        <sequence resource="EMBL-CDS" id="CAE78869"/>
    </conflict>
</comment>
<evidence type="ECO:0000255" key="1">
    <source>
        <dbReference type="HAMAP-Rule" id="MF_01517"/>
    </source>
</evidence>
<evidence type="ECO:0000305" key="2"/>
<accession>P61973</accession>
<dbReference type="EC" id="1.1.1.37" evidence="1"/>
<dbReference type="EMBL" id="BX842648">
    <property type="protein sequence ID" value="CAE78869.1"/>
    <property type="status" value="ALT_INIT"/>
    <property type="molecule type" value="Genomic_DNA"/>
</dbReference>
<dbReference type="RefSeq" id="WP_011163471.1">
    <property type="nucleotide sequence ID" value="NC_005363.1"/>
</dbReference>
<dbReference type="SMR" id="P61973"/>
<dbReference type="STRING" id="264462.Bd0928"/>
<dbReference type="GeneID" id="93011999"/>
<dbReference type="KEGG" id="bba:Bd0928"/>
<dbReference type="eggNOG" id="COG0039">
    <property type="taxonomic scope" value="Bacteria"/>
</dbReference>
<dbReference type="HOGENOM" id="CLU_040727_2_0_7"/>
<dbReference type="Proteomes" id="UP000008080">
    <property type="component" value="Chromosome"/>
</dbReference>
<dbReference type="GO" id="GO:0030060">
    <property type="term" value="F:L-malate dehydrogenase (NAD+) activity"/>
    <property type="evidence" value="ECO:0007669"/>
    <property type="project" value="UniProtKB-UniRule"/>
</dbReference>
<dbReference type="GO" id="GO:0006108">
    <property type="term" value="P:malate metabolic process"/>
    <property type="evidence" value="ECO:0007669"/>
    <property type="project" value="InterPro"/>
</dbReference>
<dbReference type="GO" id="GO:0006099">
    <property type="term" value="P:tricarboxylic acid cycle"/>
    <property type="evidence" value="ECO:0007669"/>
    <property type="project" value="UniProtKB-UniRule"/>
</dbReference>
<dbReference type="CDD" id="cd01338">
    <property type="entry name" value="MDH_chloroplast-like"/>
    <property type="match status" value="1"/>
</dbReference>
<dbReference type="FunFam" id="3.40.50.720:FF:000010">
    <property type="entry name" value="Malate dehydrogenase"/>
    <property type="match status" value="1"/>
</dbReference>
<dbReference type="FunFam" id="3.90.110.10:FF:000002">
    <property type="entry name" value="Malate dehydrogenase"/>
    <property type="match status" value="1"/>
</dbReference>
<dbReference type="Gene3D" id="3.90.110.10">
    <property type="entry name" value="Lactate dehydrogenase/glycoside hydrolase, family 4, C-terminal"/>
    <property type="match status" value="1"/>
</dbReference>
<dbReference type="Gene3D" id="3.40.50.720">
    <property type="entry name" value="NAD(P)-binding Rossmann-like Domain"/>
    <property type="match status" value="1"/>
</dbReference>
<dbReference type="HAMAP" id="MF_01517">
    <property type="entry name" value="Malate_dehydrog_2"/>
    <property type="match status" value="1"/>
</dbReference>
<dbReference type="InterPro" id="IPR001557">
    <property type="entry name" value="L-lactate/malate_DH"/>
</dbReference>
<dbReference type="InterPro" id="IPR022383">
    <property type="entry name" value="Lactate/malate_DH_C"/>
</dbReference>
<dbReference type="InterPro" id="IPR001236">
    <property type="entry name" value="Lactate/malate_DH_N"/>
</dbReference>
<dbReference type="InterPro" id="IPR015955">
    <property type="entry name" value="Lactate_DH/Glyco_Ohase_4_C"/>
</dbReference>
<dbReference type="InterPro" id="IPR010945">
    <property type="entry name" value="Malate_DH_type2"/>
</dbReference>
<dbReference type="InterPro" id="IPR036291">
    <property type="entry name" value="NAD(P)-bd_dom_sf"/>
</dbReference>
<dbReference type="NCBIfam" id="TIGR01759">
    <property type="entry name" value="MalateDH-SF1"/>
    <property type="match status" value="1"/>
</dbReference>
<dbReference type="NCBIfam" id="NF003916">
    <property type="entry name" value="PRK05442.1"/>
    <property type="match status" value="1"/>
</dbReference>
<dbReference type="PANTHER" id="PTHR23382">
    <property type="entry name" value="MALATE DEHYDROGENASE"/>
    <property type="match status" value="1"/>
</dbReference>
<dbReference type="Pfam" id="PF02866">
    <property type="entry name" value="Ldh_1_C"/>
    <property type="match status" value="1"/>
</dbReference>
<dbReference type="Pfam" id="PF00056">
    <property type="entry name" value="Ldh_1_N"/>
    <property type="match status" value="1"/>
</dbReference>
<dbReference type="PIRSF" id="PIRSF000102">
    <property type="entry name" value="Lac_mal_DH"/>
    <property type="match status" value="1"/>
</dbReference>
<dbReference type="SUPFAM" id="SSF56327">
    <property type="entry name" value="LDH C-terminal domain-like"/>
    <property type="match status" value="1"/>
</dbReference>
<dbReference type="SUPFAM" id="SSF51735">
    <property type="entry name" value="NAD(P)-binding Rossmann-fold domains"/>
    <property type="match status" value="1"/>
</dbReference>
<organism>
    <name type="scientific">Bdellovibrio bacteriovorus (strain ATCC 15356 / DSM 50701 / NCIMB 9529 / HD100)</name>
    <dbReference type="NCBI Taxonomy" id="264462"/>
    <lineage>
        <taxon>Bacteria</taxon>
        <taxon>Pseudomonadati</taxon>
        <taxon>Bdellovibrionota</taxon>
        <taxon>Bdellovibrionia</taxon>
        <taxon>Bdellovibrionales</taxon>
        <taxon>Pseudobdellovibrionaceae</taxon>
        <taxon>Bdellovibrio</taxon>
    </lineage>
</organism>
<feature type="chain" id="PRO_0000113348" description="Malate dehydrogenase">
    <location>
        <begin position="1"/>
        <end position="335"/>
    </location>
</feature>
<feature type="active site" description="Proton acceptor" evidence="1">
    <location>
        <position position="192"/>
    </location>
</feature>
<feature type="binding site" evidence="1">
    <location>
        <begin position="11"/>
        <end position="17"/>
    </location>
    <ligand>
        <name>NAD(+)</name>
        <dbReference type="ChEBI" id="CHEBI:57540"/>
    </ligand>
</feature>
<feature type="binding site" evidence="1">
    <location>
        <position position="94"/>
    </location>
    <ligand>
        <name>substrate</name>
    </ligand>
</feature>
<feature type="binding site" evidence="1">
    <location>
        <position position="100"/>
    </location>
    <ligand>
        <name>substrate</name>
    </ligand>
</feature>
<feature type="binding site" evidence="1">
    <location>
        <position position="107"/>
    </location>
    <ligand>
        <name>NAD(+)</name>
        <dbReference type="ChEBI" id="CHEBI:57540"/>
    </ligand>
</feature>
<feature type="binding site" evidence="1">
    <location>
        <position position="114"/>
    </location>
    <ligand>
        <name>NAD(+)</name>
        <dbReference type="ChEBI" id="CHEBI:57540"/>
    </ligand>
</feature>
<feature type="binding site" evidence="1">
    <location>
        <begin position="131"/>
        <end position="133"/>
    </location>
    <ligand>
        <name>NAD(+)</name>
        <dbReference type="ChEBI" id="CHEBI:57540"/>
    </ligand>
</feature>
<feature type="binding site" evidence="1">
    <location>
        <position position="133"/>
    </location>
    <ligand>
        <name>substrate</name>
    </ligand>
</feature>
<feature type="binding site" evidence="1">
    <location>
        <position position="167"/>
    </location>
    <ligand>
        <name>substrate</name>
    </ligand>
</feature>
<sequence length="335" mass="35799">MKAPVRVAVTGAAGQIGYALLFRIASGAMLGADQPVILQLLEIPDEKAQKALKGVMMELEDCAFPLLHSMIATGDPAVAFKDADVALLVGARPRGPGMERKDLLTANGQIFTVQGEAIGKYANPNVKVLVVGNPANTNAYIAMKSAMKHGRVKAKNFTAMLRLDHNRALSQLATKTGKPVASFKKVAVWGNHSPTMYPDVRFATADGAKVPELLKLGTAEGDAWNKDTFIPTVGKRGAAIIEARGLSSAASAASAAVDHIRDWWLGTNGEWVTMGIPSDGSYDIPEGIMYGFPVTCKNGEYEIVKGLEIDAFSREKMNNTLKELNEEKDAVASML</sequence>
<protein>
    <recommendedName>
        <fullName evidence="1">Malate dehydrogenase</fullName>
        <ecNumber evidence="1">1.1.1.37</ecNumber>
    </recommendedName>
</protein>